<comment type="function">
    <text evidence="1">This protein is one of the two subunits of integration host factor, a specific DNA-binding protein that functions in genetic recombination as well as in transcriptional and translational control.</text>
</comment>
<comment type="subunit">
    <text evidence="1">Heterodimer of an alpha and a beta chain.</text>
</comment>
<comment type="similarity">
    <text evidence="1">Belongs to the bacterial histone-like protein family.</text>
</comment>
<sequence>MTKSELIEKLATRQSQLSAKEVESAIKEMLEQMATTLEGGDRIEIRGFGSFSLHYRAPRTGRNPKTGTSVELEGKYVPHFKPGKELRERVDAINS</sequence>
<keyword id="KW-0233">DNA recombination</keyword>
<keyword id="KW-0238">DNA-binding</keyword>
<keyword id="KW-1185">Reference proteome</keyword>
<keyword id="KW-0804">Transcription</keyword>
<keyword id="KW-0805">Transcription regulation</keyword>
<keyword id="KW-0810">Translation regulation</keyword>
<accession>A3QEC3</accession>
<evidence type="ECO:0000255" key="1">
    <source>
        <dbReference type="HAMAP-Rule" id="MF_00381"/>
    </source>
</evidence>
<organism>
    <name type="scientific">Shewanella loihica (strain ATCC BAA-1088 / PV-4)</name>
    <dbReference type="NCBI Taxonomy" id="323850"/>
    <lineage>
        <taxon>Bacteria</taxon>
        <taxon>Pseudomonadati</taxon>
        <taxon>Pseudomonadota</taxon>
        <taxon>Gammaproteobacteria</taxon>
        <taxon>Alteromonadales</taxon>
        <taxon>Shewanellaceae</taxon>
        <taxon>Shewanella</taxon>
    </lineage>
</organism>
<reference key="1">
    <citation type="submission" date="2007-03" db="EMBL/GenBank/DDBJ databases">
        <title>Complete sequence of Shewanella loihica PV-4.</title>
        <authorList>
            <consortium name="US DOE Joint Genome Institute"/>
            <person name="Copeland A."/>
            <person name="Lucas S."/>
            <person name="Lapidus A."/>
            <person name="Barry K."/>
            <person name="Detter J.C."/>
            <person name="Glavina del Rio T."/>
            <person name="Hammon N."/>
            <person name="Israni S."/>
            <person name="Dalin E."/>
            <person name="Tice H."/>
            <person name="Pitluck S."/>
            <person name="Chain P."/>
            <person name="Malfatti S."/>
            <person name="Shin M."/>
            <person name="Vergez L."/>
            <person name="Schmutz J."/>
            <person name="Larimer F."/>
            <person name="Land M."/>
            <person name="Hauser L."/>
            <person name="Kyrpides N."/>
            <person name="Mikhailova N."/>
            <person name="Romine M.F."/>
            <person name="Serres G."/>
            <person name="Fredrickson J."/>
            <person name="Tiedje J."/>
            <person name="Richardson P."/>
        </authorList>
    </citation>
    <scope>NUCLEOTIDE SEQUENCE [LARGE SCALE GENOMIC DNA]</scope>
    <source>
        <strain>ATCC BAA-1088 / PV-4</strain>
    </source>
</reference>
<feature type="chain" id="PRO_1000060658" description="Integration host factor subunit beta">
    <location>
        <begin position="1"/>
        <end position="95"/>
    </location>
</feature>
<protein>
    <recommendedName>
        <fullName evidence="1">Integration host factor subunit beta</fullName>
        <shortName evidence="1">IHF-beta</shortName>
    </recommendedName>
</protein>
<dbReference type="EMBL" id="CP000606">
    <property type="protein sequence ID" value="ABO23821.1"/>
    <property type="molecule type" value="Genomic_DNA"/>
</dbReference>
<dbReference type="RefSeq" id="WP_011865753.1">
    <property type="nucleotide sequence ID" value="NC_009092.1"/>
</dbReference>
<dbReference type="SMR" id="A3QEC3"/>
<dbReference type="STRING" id="323850.Shew_1955"/>
<dbReference type="KEGG" id="slo:Shew_1955"/>
<dbReference type="eggNOG" id="COG0776">
    <property type="taxonomic scope" value="Bacteria"/>
</dbReference>
<dbReference type="HOGENOM" id="CLU_105066_2_0_6"/>
<dbReference type="OrthoDB" id="9804203at2"/>
<dbReference type="Proteomes" id="UP000001558">
    <property type="component" value="Chromosome"/>
</dbReference>
<dbReference type="GO" id="GO:0005694">
    <property type="term" value="C:chromosome"/>
    <property type="evidence" value="ECO:0007669"/>
    <property type="project" value="InterPro"/>
</dbReference>
<dbReference type="GO" id="GO:0005829">
    <property type="term" value="C:cytosol"/>
    <property type="evidence" value="ECO:0007669"/>
    <property type="project" value="TreeGrafter"/>
</dbReference>
<dbReference type="GO" id="GO:0003677">
    <property type="term" value="F:DNA binding"/>
    <property type="evidence" value="ECO:0007669"/>
    <property type="project" value="UniProtKB-UniRule"/>
</dbReference>
<dbReference type="GO" id="GO:0030527">
    <property type="term" value="F:structural constituent of chromatin"/>
    <property type="evidence" value="ECO:0007669"/>
    <property type="project" value="InterPro"/>
</dbReference>
<dbReference type="GO" id="GO:0006310">
    <property type="term" value="P:DNA recombination"/>
    <property type="evidence" value="ECO:0007669"/>
    <property type="project" value="UniProtKB-UniRule"/>
</dbReference>
<dbReference type="GO" id="GO:0006355">
    <property type="term" value="P:regulation of DNA-templated transcription"/>
    <property type="evidence" value="ECO:0007669"/>
    <property type="project" value="UniProtKB-UniRule"/>
</dbReference>
<dbReference type="GO" id="GO:0006417">
    <property type="term" value="P:regulation of translation"/>
    <property type="evidence" value="ECO:0007669"/>
    <property type="project" value="UniProtKB-UniRule"/>
</dbReference>
<dbReference type="CDD" id="cd13836">
    <property type="entry name" value="IHF_B"/>
    <property type="match status" value="1"/>
</dbReference>
<dbReference type="FunFam" id="4.10.520.10:FF:000003">
    <property type="entry name" value="Integration host factor subunit beta"/>
    <property type="match status" value="1"/>
</dbReference>
<dbReference type="Gene3D" id="4.10.520.10">
    <property type="entry name" value="IHF-like DNA-binding proteins"/>
    <property type="match status" value="1"/>
</dbReference>
<dbReference type="HAMAP" id="MF_00381">
    <property type="entry name" value="IHF_beta"/>
    <property type="match status" value="1"/>
</dbReference>
<dbReference type="InterPro" id="IPR000119">
    <property type="entry name" value="Hist_DNA-bd"/>
</dbReference>
<dbReference type="InterPro" id="IPR020816">
    <property type="entry name" value="Histone-like_DNA-bd_CS"/>
</dbReference>
<dbReference type="InterPro" id="IPR010992">
    <property type="entry name" value="IHF-like_DNA-bd_dom_sf"/>
</dbReference>
<dbReference type="InterPro" id="IPR005685">
    <property type="entry name" value="IHF_beta"/>
</dbReference>
<dbReference type="NCBIfam" id="TIGR00988">
    <property type="entry name" value="hip"/>
    <property type="match status" value="1"/>
</dbReference>
<dbReference type="NCBIfam" id="NF001222">
    <property type="entry name" value="PRK00199.1"/>
    <property type="match status" value="1"/>
</dbReference>
<dbReference type="PANTHER" id="PTHR33175">
    <property type="entry name" value="DNA-BINDING PROTEIN HU"/>
    <property type="match status" value="1"/>
</dbReference>
<dbReference type="PANTHER" id="PTHR33175:SF5">
    <property type="entry name" value="INTEGRATION HOST FACTOR SUBUNIT BETA"/>
    <property type="match status" value="1"/>
</dbReference>
<dbReference type="Pfam" id="PF00216">
    <property type="entry name" value="Bac_DNA_binding"/>
    <property type="match status" value="1"/>
</dbReference>
<dbReference type="PRINTS" id="PR01727">
    <property type="entry name" value="DNABINDINGHU"/>
</dbReference>
<dbReference type="SMART" id="SM00411">
    <property type="entry name" value="BHL"/>
    <property type="match status" value="1"/>
</dbReference>
<dbReference type="SUPFAM" id="SSF47729">
    <property type="entry name" value="IHF-like DNA-binding proteins"/>
    <property type="match status" value="1"/>
</dbReference>
<dbReference type="PROSITE" id="PS00045">
    <property type="entry name" value="HISTONE_LIKE"/>
    <property type="match status" value="1"/>
</dbReference>
<proteinExistence type="inferred from homology"/>
<name>IHFB_SHELP</name>
<gene>
    <name evidence="1" type="primary">ihfB</name>
    <name evidence="1" type="synonym">himD</name>
    <name type="ordered locus">Shew_1955</name>
</gene>